<accession>Q8R605</accession>
<evidence type="ECO:0000255" key="1">
    <source>
        <dbReference type="HAMAP-Rule" id="MF_00440"/>
    </source>
</evidence>
<keyword id="KW-0067">ATP-binding</keyword>
<keyword id="KW-0238">DNA-binding</keyword>
<keyword id="KW-0479">Metal-binding</keyword>
<keyword id="KW-0547">Nucleotide-binding</keyword>
<keyword id="KW-1185">Reference proteome</keyword>
<keyword id="KW-0678">Repressor</keyword>
<keyword id="KW-0804">Transcription</keyword>
<keyword id="KW-0805">Transcription regulation</keyword>
<keyword id="KW-0862">Zinc</keyword>
<keyword id="KW-0863">Zinc-finger</keyword>
<protein>
    <recommendedName>
        <fullName evidence="1">Transcriptional repressor NrdR</fullName>
    </recommendedName>
</protein>
<proteinExistence type="inferred from homology"/>
<comment type="function">
    <text evidence="1">Negatively regulates transcription of bacterial ribonucleotide reductase nrd genes and operons by binding to NrdR-boxes.</text>
</comment>
<comment type="cofactor">
    <cofactor evidence="1">
        <name>Zn(2+)</name>
        <dbReference type="ChEBI" id="CHEBI:29105"/>
    </cofactor>
    <text evidence="1">Binds 1 zinc ion.</text>
</comment>
<comment type="similarity">
    <text evidence="1">Belongs to the NrdR family.</text>
</comment>
<gene>
    <name evidence="1" type="primary">nrdR</name>
    <name type="ordered locus">FN1490</name>
</gene>
<reference key="1">
    <citation type="journal article" date="2002" name="J. Bacteriol.">
        <title>Genome sequence and analysis of the oral bacterium Fusobacterium nucleatum strain ATCC 25586.</title>
        <authorList>
            <person name="Kapatral V."/>
            <person name="Anderson I."/>
            <person name="Ivanova N."/>
            <person name="Reznik G."/>
            <person name="Los T."/>
            <person name="Lykidis A."/>
            <person name="Bhattacharyya A."/>
            <person name="Bartman A."/>
            <person name="Gardner W."/>
            <person name="Grechkin G."/>
            <person name="Zhu L."/>
            <person name="Vasieva O."/>
            <person name="Chu L."/>
            <person name="Kogan Y."/>
            <person name="Chaga O."/>
            <person name="Goltsman E."/>
            <person name="Bernal A."/>
            <person name="Larsen N."/>
            <person name="D'Souza M."/>
            <person name="Walunas T."/>
            <person name="Pusch G."/>
            <person name="Haselkorn R."/>
            <person name="Fonstein M."/>
            <person name="Kyrpides N.C."/>
            <person name="Overbeek R."/>
        </authorList>
    </citation>
    <scope>NUCLEOTIDE SEQUENCE [LARGE SCALE GENOMIC DNA]</scope>
    <source>
        <strain>ATCC 25586 / DSM 15643 / BCRC 10681 / CIP 101130 / JCM 8532 / KCTC 2640 / LMG 13131 / VPI 4355</strain>
    </source>
</reference>
<dbReference type="EMBL" id="AE009951">
    <property type="protein sequence ID" value="AAL95684.1"/>
    <property type="molecule type" value="Genomic_DNA"/>
</dbReference>
<dbReference type="RefSeq" id="NP_604384.1">
    <property type="nucleotide sequence ID" value="NC_003454.1"/>
</dbReference>
<dbReference type="RefSeq" id="WP_005902339.1">
    <property type="nucleotide sequence ID" value="NZ_OZ209243.1"/>
</dbReference>
<dbReference type="SMR" id="Q8R605"/>
<dbReference type="FunCoup" id="Q8R605">
    <property type="interactions" value="186"/>
</dbReference>
<dbReference type="STRING" id="190304.FN1490"/>
<dbReference type="PaxDb" id="190304-FN1490"/>
<dbReference type="EnsemblBacteria" id="AAL95684">
    <property type="protein sequence ID" value="AAL95684"/>
    <property type="gene ID" value="FN1490"/>
</dbReference>
<dbReference type="GeneID" id="79784453"/>
<dbReference type="KEGG" id="fnu:FN1490"/>
<dbReference type="PATRIC" id="fig|190304.8.peg.2050"/>
<dbReference type="eggNOG" id="COG1327">
    <property type="taxonomic scope" value="Bacteria"/>
</dbReference>
<dbReference type="HOGENOM" id="CLU_108412_0_0_0"/>
<dbReference type="InParanoid" id="Q8R605"/>
<dbReference type="BioCyc" id="FNUC190304:G1FZS-2058-MONOMER"/>
<dbReference type="Proteomes" id="UP000002521">
    <property type="component" value="Chromosome"/>
</dbReference>
<dbReference type="GO" id="GO:0005524">
    <property type="term" value="F:ATP binding"/>
    <property type="evidence" value="ECO:0007669"/>
    <property type="project" value="UniProtKB-KW"/>
</dbReference>
<dbReference type="GO" id="GO:0003690">
    <property type="term" value="F:double-stranded DNA binding"/>
    <property type="evidence" value="ECO:0000318"/>
    <property type="project" value="GO_Central"/>
</dbReference>
<dbReference type="GO" id="GO:0008270">
    <property type="term" value="F:zinc ion binding"/>
    <property type="evidence" value="ECO:0007669"/>
    <property type="project" value="UniProtKB-KW"/>
</dbReference>
<dbReference type="GO" id="GO:0045892">
    <property type="term" value="P:negative regulation of DNA-templated transcription"/>
    <property type="evidence" value="ECO:0000318"/>
    <property type="project" value="GO_Central"/>
</dbReference>
<dbReference type="HAMAP" id="MF_00440">
    <property type="entry name" value="NrdR"/>
    <property type="match status" value="1"/>
</dbReference>
<dbReference type="InterPro" id="IPR005144">
    <property type="entry name" value="ATP-cone_dom"/>
</dbReference>
<dbReference type="InterPro" id="IPR055173">
    <property type="entry name" value="NrdR-like_N"/>
</dbReference>
<dbReference type="InterPro" id="IPR003796">
    <property type="entry name" value="RNR_NrdR-like"/>
</dbReference>
<dbReference type="NCBIfam" id="TIGR00244">
    <property type="entry name" value="transcriptional regulator NrdR"/>
    <property type="match status" value="1"/>
</dbReference>
<dbReference type="PANTHER" id="PTHR30455">
    <property type="entry name" value="TRANSCRIPTIONAL REPRESSOR NRDR"/>
    <property type="match status" value="1"/>
</dbReference>
<dbReference type="PANTHER" id="PTHR30455:SF2">
    <property type="entry name" value="TRANSCRIPTIONAL REPRESSOR NRDR"/>
    <property type="match status" value="1"/>
</dbReference>
<dbReference type="Pfam" id="PF03477">
    <property type="entry name" value="ATP-cone"/>
    <property type="match status" value="1"/>
</dbReference>
<dbReference type="Pfam" id="PF22811">
    <property type="entry name" value="Zn_ribbon_NrdR"/>
    <property type="match status" value="1"/>
</dbReference>
<dbReference type="PROSITE" id="PS51161">
    <property type="entry name" value="ATP_CONE"/>
    <property type="match status" value="1"/>
</dbReference>
<name>NRDR_FUSNN</name>
<feature type="chain" id="PRO_0000182299" description="Transcriptional repressor NrdR">
    <location>
        <begin position="1"/>
        <end position="149"/>
    </location>
</feature>
<feature type="domain" description="ATP-cone" evidence="1">
    <location>
        <begin position="48"/>
        <end position="138"/>
    </location>
</feature>
<feature type="zinc finger region" evidence="1">
    <location>
        <begin position="3"/>
        <end position="33"/>
    </location>
</feature>
<organism>
    <name type="scientific">Fusobacterium nucleatum subsp. nucleatum (strain ATCC 25586 / DSM 15643 / BCRC 10681 / CIP 101130 / JCM 8532 / KCTC 2640 / LMG 13131 / VPI 4355)</name>
    <dbReference type="NCBI Taxonomy" id="190304"/>
    <lineage>
        <taxon>Bacteria</taxon>
        <taxon>Fusobacteriati</taxon>
        <taxon>Fusobacteriota</taxon>
        <taxon>Fusobacteriia</taxon>
        <taxon>Fusobacteriales</taxon>
        <taxon>Fusobacteriaceae</taxon>
        <taxon>Fusobacterium</taxon>
    </lineage>
</organism>
<sequence length="149" mass="17590">MKCPFCSSEDTKVVDSRTTIDGSTKRRRECNNCLKRFSTYERFEESPIYVVKKDNRRVKYDREKLLRGLTFATAKRNVSREELDKIITDIERSLQNSLISEISSKDLGEKVLEKLRELDQVAYVRFASVYKEFDDIKSFIEIVEEIKKD</sequence>